<feature type="chain" id="PRO_0000431086" description="Nuclear pore complex protein NUP98A">
    <location>
        <begin position="1"/>
        <end position="1041"/>
    </location>
</feature>
<feature type="repeat" description="1">
    <location>
        <begin position="2"/>
        <end position="3"/>
    </location>
</feature>
<feature type="repeat" description="2">
    <location>
        <begin position="8"/>
        <end position="9"/>
    </location>
</feature>
<feature type="repeat" description="3">
    <location>
        <begin position="17"/>
        <end position="18"/>
    </location>
</feature>
<feature type="repeat" description="4">
    <location>
        <begin position="23"/>
        <end position="24"/>
    </location>
</feature>
<feature type="repeat" description="5">
    <location>
        <begin position="41"/>
        <end position="42"/>
    </location>
</feature>
<feature type="repeat" description="6">
    <location>
        <begin position="56"/>
        <end position="57"/>
    </location>
</feature>
<feature type="repeat" description="7">
    <location>
        <begin position="64"/>
        <end position="65"/>
    </location>
</feature>
<feature type="repeat" description="8">
    <location>
        <begin position="79"/>
        <end position="80"/>
    </location>
</feature>
<feature type="repeat" description="9">
    <location>
        <begin position="87"/>
        <end position="88"/>
    </location>
</feature>
<feature type="repeat" description="10">
    <location>
        <begin position="94"/>
        <end position="95"/>
    </location>
</feature>
<feature type="repeat" description="11">
    <location>
        <begin position="103"/>
        <end position="104"/>
    </location>
</feature>
<feature type="repeat" description="12">
    <location>
        <begin position="109"/>
        <end position="110"/>
    </location>
</feature>
<feature type="repeat" description="13">
    <location>
        <begin position="124"/>
        <end position="125"/>
    </location>
</feature>
<feature type="repeat" description="14">
    <location>
        <begin position="135"/>
        <end position="136"/>
    </location>
</feature>
<feature type="repeat" description="15">
    <location>
        <begin position="140"/>
        <end position="141"/>
    </location>
</feature>
<feature type="repeat" description="16">
    <location>
        <begin position="146"/>
        <end position="147"/>
    </location>
</feature>
<feature type="repeat" description="17">
    <location>
        <begin position="154"/>
        <end position="155"/>
    </location>
</feature>
<feature type="repeat" description="18">
    <location>
        <begin position="162"/>
        <end position="163"/>
    </location>
</feature>
<feature type="repeat" description="19">
    <location>
        <begin position="170"/>
        <end position="171"/>
    </location>
</feature>
<feature type="repeat" description="20">
    <location>
        <begin position="178"/>
        <end position="179"/>
    </location>
</feature>
<feature type="repeat" description="21">
    <location>
        <begin position="186"/>
        <end position="187"/>
    </location>
</feature>
<feature type="repeat" description="22">
    <location>
        <begin position="194"/>
        <end position="195"/>
    </location>
</feature>
<feature type="repeat" description="23">
    <location>
        <begin position="202"/>
        <end position="203"/>
    </location>
</feature>
<feature type="repeat" description="24">
    <location>
        <begin position="210"/>
        <end position="211"/>
    </location>
</feature>
<feature type="repeat" description="25">
    <location>
        <begin position="217"/>
        <end position="218"/>
    </location>
</feature>
<feature type="repeat" description="26">
    <location>
        <begin position="222"/>
        <end position="223"/>
    </location>
</feature>
<feature type="repeat" description="27">
    <location>
        <begin position="228"/>
        <end position="229"/>
    </location>
</feature>
<feature type="repeat" description="28">
    <location>
        <begin position="236"/>
        <end position="237"/>
    </location>
</feature>
<feature type="repeat" description="29">
    <location>
        <begin position="244"/>
        <end position="245"/>
    </location>
</feature>
<feature type="repeat" description="30">
    <location>
        <begin position="252"/>
        <end position="253"/>
    </location>
</feature>
<feature type="repeat" description="31">
    <location>
        <begin position="260"/>
        <end position="261"/>
    </location>
</feature>
<feature type="repeat" description="32">
    <location>
        <begin position="268"/>
        <end position="269"/>
    </location>
</feature>
<feature type="repeat" description="33">
    <location>
        <begin position="276"/>
        <end position="277"/>
    </location>
</feature>
<feature type="repeat" description="34">
    <location>
        <begin position="284"/>
        <end position="285"/>
    </location>
</feature>
<feature type="repeat" description="35">
    <location>
        <begin position="294"/>
        <end position="295"/>
    </location>
</feature>
<feature type="repeat" description="36">
    <location>
        <begin position="300"/>
        <end position="301"/>
    </location>
</feature>
<feature type="repeat" description="37">
    <location>
        <begin position="307"/>
        <end position="308"/>
    </location>
</feature>
<feature type="repeat" description="38">
    <location>
        <begin position="312"/>
        <end position="313"/>
    </location>
</feature>
<feature type="repeat" description="39">
    <location>
        <begin position="319"/>
        <end position="320"/>
    </location>
</feature>
<feature type="repeat" description="40">
    <location>
        <begin position="329"/>
        <end position="330"/>
    </location>
</feature>
<feature type="repeat" description="41">
    <location>
        <begin position="334"/>
        <end position="335"/>
    </location>
</feature>
<feature type="repeat" description="42">
    <location>
        <begin position="339"/>
        <end position="340"/>
    </location>
</feature>
<feature type="repeat" description="43">
    <location>
        <begin position="411"/>
        <end position="412"/>
    </location>
</feature>
<feature type="repeat" description="44">
    <location>
        <begin position="427"/>
        <end position="428"/>
    </location>
</feature>
<feature type="repeat" description="45">
    <location>
        <begin position="459"/>
        <end position="460"/>
    </location>
</feature>
<feature type="repeat" description="46">
    <location>
        <begin position="466"/>
        <end position="467"/>
    </location>
</feature>
<feature type="repeat" description="47">
    <location>
        <begin position="471"/>
        <end position="472"/>
    </location>
</feature>
<feature type="repeat" description="48">
    <location>
        <begin position="480"/>
        <end position="481"/>
    </location>
</feature>
<feature type="repeat" description="49">
    <location>
        <begin position="491"/>
        <end position="492"/>
    </location>
</feature>
<feature type="repeat" description="50">
    <location>
        <begin position="497"/>
        <end position="498"/>
    </location>
</feature>
<feature type="repeat" description="51">
    <location>
        <begin position="506"/>
        <end position="507"/>
    </location>
</feature>
<feature type="repeat" description="52">
    <location>
        <begin position="514"/>
        <end position="515"/>
    </location>
</feature>
<feature type="repeat" description="53">
    <location>
        <begin position="521"/>
        <end position="522"/>
    </location>
</feature>
<feature type="repeat" description="54">
    <location>
        <begin position="533"/>
        <end position="534"/>
    </location>
</feature>
<feature type="repeat" description="55">
    <location>
        <begin position="555"/>
        <end position="556"/>
    </location>
</feature>
<feature type="repeat" description="56">
    <location>
        <begin position="562"/>
        <end position="563"/>
    </location>
</feature>
<feature type="repeat" description="57">
    <location>
        <begin position="565"/>
        <end position="566"/>
    </location>
</feature>
<feature type="repeat" description="58">
    <location>
        <begin position="573"/>
        <end position="574"/>
    </location>
</feature>
<feature type="repeat" description="59">
    <location>
        <begin position="586"/>
        <end position="587"/>
    </location>
</feature>
<feature type="repeat" description="60">
    <location>
        <begin position="604"/>
        <end position="605"/>
    </location>
</feature>
<feature type="repeat" description="61">
    <location>
        <begin position="627"/>
        <end position="628"/>
    </location>
</feature>
<feature type="repeat" description="62">
    <location>
        <begin position="632"/>
        <end position="633"/>
    </location>
</feature>
<feature type="repeat" description="63">
    <location>
        <begin position="650"/>
        <end position="651"/>
    </location>
</feature>
<feature type="repeat" description="64">
    <location>
        <begin position="655"/>
        <end position="656"/>
    </location>
</feature>
<feature type="repeat" description="65">
    <location>
        <begin position="676"/>
        <end position="677"/>
    </location>
</feature>
<feature type="domain" description="Peptidase S59" evidence="1">
    <location>
        <begin position="885"/>
        <end position="1027"/>
    </location>
</feature>
<feature type="region of interest" description="Disordered" evidence="2">
    <location>
        <begin position="1"/>
        <end position="44"/>
    </location>
</feature>
<feature type="region of interest" description="65 X 2 AA repeats of F-G">
    <location>
        <begin position="2"/>
        <end position="677"/>
    </location>
</feature>
<feature type="region of interest" description="Disordered" evidence="2">
    <location>
        <begin position="98"/>
        <end position="171"/>
    </location>
</feature>
<feature type="region of interest" description="Disordered" evidence="2">
    <location>
        <begin position="315"/>
        <end position="347"/>
    </location>
</feature>
<feature type="region of interest" description="Disordered" evidence="2">
    <location>
        <begin position="392"/>
        <end position="447"/>
    </location>
</feature>
<feature type="region of interest" description="Disordered" evidence="2">
    <location>
        <begin position="517"/>
        <end position="560"/>
    </location>
</feature>
<feature type="region of interest" description="Disordered" evidence="2">
    <location>
        <begin position="734"/>
        <end position="860"/>
    </location>
</feature>
<feature type="compositionally biased region" description="Polar residues" evidence="2">
    <location>
        <begin position="1"/>
        <end position="34"/>
    </location>
</feature>
<feature type="compositionally biased region" description="Polar residues" evidence="2">
    <location>
        <begin position="117"/>
        <end position="171"/>
    </location>
</feature>
<feature type="compositionally biased region" description="Low complexity" evidence="2">
    <location>
        <begin position="430"/>
        <end position="447"/>
    </location>
</feature>
<feature type="compositionally biased region" description="Low complexity" evidence="2">
    <location>
        <begin position="517"/>
        <end position="526"/>
    </location>
</feature>
<feature type="compositionally biased region" description="Polar residues" evidence="2">
    <location>
        <begin position="533"/>
        <end position="560"/>
    </location>
</feature>
<feature type="compositionally biased region" description="Basic and acidic residues" evidence="2">
    <location>
        <begin position="782"/>
        <end position="793"/>
    </location>
</feature>
<feature type="compositionally biased region" description="Polar residues" evidence="2">
    <location>
        <begin position="831"/>
        <end position="846"/>
    </location>
</feature>
<dbReference type="EMBL" id="AC005489">
    <property type="protein sequence ID" value="AAD32891.1"/>
    <property type="status" value="ALT_SEQ"/>
    <property type="molecule type" value="Genomic_DNA"/>
</dbReference>
<dbReference type="EMBL" id="CP002684">
    <property type="protein sequence ID" value="AEE28574.1"/>
    <property type="molecule type" value="Genomic_DNA"/>
</dbReference>
<dbReference type="EMBL" id="CP002684">
    <property type="protein sequence ID" value="AEE28575.1"/>
    <property type="molecule type" value="Genomic_DNA"/>
</dbReference>
<dbReference type="EMBL" id="CP002684">
    <property type="protein sequence ID" value="ANM58231.1"/>
    <property type="molecule type" value="Genomic_DNA"/>
</dbReference>
<dbReference type="EMBL" id="AY078948">
    <property type="protein sequence ID" value="AAL84948.1"/>
    <property type="molecule type" value="mRNA"/>
</dbReference>
<dbReference type="EMBL" id="BT003030">
    <property type="protein sequence ID" value="AAO23595.1"/>
    <property type="molecule type" value="mRNA"/>
</dbReference>
<dbReference type="EMBL" id="AK226964">
    <property type="protein sequence ID" value="BAE99032.1"/>
    <property type="molecule type" value="mRNA"/>
</dbReference>
<dbReference type="PIR" id="H86237">
    <property type="entry name" value="H86237"/>
</dbReference>
<dbReference type="RefSeq" id="NP_001031018.1">
    <property type="nucleotide sequence ID" value="NM_001035941.2"/>
</dbReference>
<dbReference type="RefSeq" id="NP_001320682.1">
    <property type="nucleotide sequence ID" value="NM_001331900.1"/>
</dbReference>
<dbReference type="RefSeq" id="NP_172510.2">
    <property type="nucleotide sequence ID" value="NM_100914.4"/>
</dbReference>
<dbReference type="BioGRID" id="22819">
    <property type="interactions" value="3"/>
</dbReference>
<dbReference type="FunCoup" id="Q8RY25">
    <property type="interactions" value="1009"/>
</dbReference>
<dbReference type="IntAct" id="Q8RY25">
    <property type="interactions" value="1"/>
</dbReference>
<dbReference type="STRING" id="3702.Q8RY25"/>
<dbReference type="MEROPS" id="S59.A02"/>
<dbReference type="GlyGen" id="Q8RY25">
    <property type="glycosylation" value="13 sites"/>
</dbReference>
<dbReference type="iPTMnet" id="Q8RY25"/>
<dbReference type="PaxDb" id="3702-AT1G10390.1"/>
<dbReference type="ProteomicsDB" id="248665"/>
<dbReference type="EnsemblPlants" id="AT1G10390.1">
    <property type="protein sequence ID" value="AT1G10390.1"/>
    <property type="gene ID" value="AT1G10390"/>
</dbReference>
<dbReference type="EnsemblPlants" id="AT1G10390.2">
    <property type="protein sequence ID" value="AT1G10390.2"/>
    <property type="gene ID" value="AT1G10390"/>
</dbReference>
<dbReference type="EnsemblPlants" id="AT1G10390.3">
    <property type="protein sequence ID" value="AT1G10390.3"/>
    <property type="gene ID" value="AT1G10390"/>
</dbReference>
<dbReference type="GeneID" id="837579"/>
<dbReference type="Gramene" id="AT1G10390.1">
    <property type="protein sequence ID" value="AT1G10390.1"/>
    <property type="gene ID" value="AT1G10390"/>
</dbReference>
<dbReference type="Gramene" id="AT1G10390.2">
    <property type="protein sequence ID" value="AT1G10390.2"/>
    <property type="gene ID" value="AT1G10390"/>
</dbReference>
<dbReference type="Gramene" id="AT1G10390.3">
    <property type="protein sequence ID" value="AT1G10390.3"/>
    <property type="gene ID" value="AT1G10390"/>
</dbReference>
<dbReference type="KEGG" id="ath:AT1G10390"/>
<dbReference type="Araport" id="AT1G10390"/>
<dbReference type="TAIR" id="AT1G10390">
    <property type="gene designation" value="DRA2"/>
</dbReference>
<dbReference type="eggNOG" id="KOG0845">
    <property type="taxonomic scope" value="Eukaryota"/>
</dbReference>
<dbReference type="HOGENOM" id="CLU_012217_0_0_1"/>
<dbReference type="InParanoid" id="Q8RY25"/>
<dbReference type="OMA" id="GDILWPG"/>
<dbReference type="PhylomeDB" id="Q8RY25"/>
<dbReference type="CD-CODE" id="4299E36E">
    <property type="entry name" value="Nucleolus"/>
</dbReference>
<dbReference type="PRO" id="PR:Q8RY25"/>
<dbReference type="Proteomes" id="UP000006548">
    <property type="component" value="Chromosome 1"/>
</dbReference>
<dbReference type="ExpressionAtlas" id="Q8RY25">
    <property type="expression patterns" value="baseline and differential"/>
</dbReference>
<dbReference type="GO" id="GO:0005737">
    <property type="term" value="C:cytoplasm"/>
    <property type="evidence" value="ECO:0000314"/>
    <property type="project" value="TAIR"/>
</dbReference>
<dbReference type="GO" id="GO:0005635">
    <property type="term" value="C:nuclear envelope"/>
    <property type="evidence" value="ECO:0000314"/>
    <property type="project" value="TAIR"/>
</dbReference>
<dbReference type="GO" id="GO:0031965">
    <property type="term" value="C:nuclear membrane"/>
    <property type="evidence" value="ECO:0000314"/>
    <property type="project" value="TAIR"/>
</dbReference>
<dbReference type="GO" id="GO:0005643">
    <property type="term" value="C:nuclear pore"/>
    <property type="evidence" value="ECO:0007669"/>
    <property type="project" value="UniProtKB-SubCell"/>
</dbReference>
<dbReference type="GO" id="GO:0005634">
    <property type="term" value="C:nucleus"/>
    <property type="evidence" value="ECO:0000314"/>
    <property type="project" value="TAIR"/>
</dbReference>
<dbReference type="GO" id="GO:0017056">
    <property type="term" value="F:structural constituent of nuclear pore"/>
    <property type="evidence" value="ECO:0007669"/>
    <property type="project" value="InterPro"/>
</dbReference>
<dbReference type="GO" id="GO:0006406">
    <property type="term" value="P:mRNA export from nucleus"/>
    <property type="evidence" value="ECO:0000315"/>
    <property type="project" value="TAIR"/>
</dbReference>
<dbReference type="GO" id="GO:0048573">
    <property type="term" value="P:photoperiodism, flowering"/>
    <property type="evidence" value="ECO:0000316"/>
    <property type="project" value="TAIR"/>
</dbReference>
<dbReference type="GO" id="GO:0015031">
    <property type="term" value="P:protein transport"/>
    <property type="evidence" value="ECO:0007669"/>
    <property type="project" value="UniProtKB-KW"/>
</dbReference>
<dbReference type="GO" id="GO:1902446">
    <property type="term" value="P:regulation of shade avoidance"/>
    <property type="evidence" value="ECO:0000315"/>
    <property type="project" value="TAIR"/>
</dbReference>
<dbReference type="FunFam" id="1.10.10.2360:FF:000001">
    <property type="entry name" value="Nuclear pore complex protein Nup98-Nup96"/>
    <property type="match status" value="1"/>
</dbReference>
<dbReference type="FunFam" id="3.30.1610.10:FF:000002">
    <property type="entry name" value="nuclear pore complex protein NUP98A"/>
    <property type="match status" value="1"/>
</dbReference>
<dbReference type="Gene3D" id="1.10.10.2360">
    <property type="match status" value="1"/>
</dbReference>
<dbReference type="Gene3D" id="3.30.1610.10">
    <property type="entry name" value="Peptidase S59, nucleoporin"/>
    <property type="match status" value="1"/>
</dbReference>
<dbReference type="InterPro" id="IPR037665">
    <property type="entry name" value="Nucleoporin_S59-like"/>
</dbReference>
<dbReference type="InterPro" id="IPR007230">
    <property type="entry name" value="Nup98_auto-Pept-S59_dom"/>
</dbReference>
<dbReference type="InterPro" id="IPR036903">
    <property type="entry name" value="Nup98_auto-Pept-S59_dom_sf"/>
</dbReference>
<dbReference type="PANTHER" id="PTHR23198:SF25">
    <property type="entry name" value="F2K11.10-RELATED"/>
    <property type="match status" value="1"/>
</dbReference>
<dbReference type="PANTHER" id="PTHR23198">
    <property type="entry name" value="NUCLEOPORIN"/>
    <property type="match status" value="1"/>
</dbReference>
<dbReference type="Pfam" id="PF04096">
    <property type="entry name" value="Nucleoporin2"/>
    <property type="match status" value="1"/>
</dbReference>
<dbReference type="SUPFAM" id="SSF82215">
    <property type="entry name" value="C-terminal autoproteolytic domain of nucleoporin nup98"/>
    <property type="match status" value="1"/>
</dbReference>
<dbReference type="PROSITE" id="PS51434">
    <property type="entry name" value="NUP_C"/>
    <property type="match status" value="1"/>
</dbReference>
<keyword id="KW-0509">mRNA transport</keyword>
<keyword id="KW-0906">Nuclear pore complex</keyword>
<keyword id="KW-0539">Nucleus</keyword>
<keyword id="KW-0653">Protein transport</keyword>
<keyword id="KW-1185">Reference proteome</keyword>
<keyword id="KW-0677">Repeat</keyword>
<keyword id="KW-0811">Translocation</keyword>
<keyword id="KW-0813">Transport</keyword>
<protein>
    <recommendedName>
        <fullName evidence="3">Nuclear pore complex protein NUP98A</fullName>
    </recommendedName>
    <alternativeName>
        <fullName evidence="3">Nucleoporin 98A</fullName>
    </alternativeName>
    <alternativeName>
        <fullName evidence="8">Nucleoporin autopeptidase</fullName>
    </alternativeName>
</protein>
<evidence type="ECO:0000255" key="1">
    <source>
        <dbReference type="PROSITE-ProRule" id="PRU00765"/>
    </source>
</evidence>
<evidence type="ECO:0000256" key="2">
    <source>
        <dbReference type="SAM" id="MobiDB-lite"/>
    </source>
</evidence>
<evidence type="ECO:0000303" key="3">
    <source>
    </source>
</evidence>
<evidence type="ECO:0000305" key="4"/>
<evidence type="ECO:0000305" key="5">
    <source>
    </source>
</evidence>
<evidence type="ECO:0000312" key="6">
    <source>
        <dbReference type="Araport" id="AT1G10390"/>
    </source>
</evidence>
<evidence type="ECO:0000312" key="7">
    <source>
        <dbReference type="EMBL" id="AAL84948.1"/>
    </source>
</evidence>
<evidence type="ECO:0000312" key="8">
    <source>
        <dbReference type="EMBL" id="AEE28574.1"/>
    </source>
</evidence>
<sequence>MFGSSNPFGQSSGTSPFGSQSLFGQTSNTSSNNPFAPATPFGTSAPFAAQSGSSIFGSTSTGVFGAPQTSSPFASTPTFGASSSPAFGNSTPAFGASPASSPFGGSSGFGQKPLGFSTPQSNPFGNSTQQSQPAFGNTSFGSSTPFGATNTPAFGAPSTPSFGATSTPSFGASSTPAFGATNTPAFGASNSPSFGATNTPAFGASPTPAFGSTGTTFGNTGFGSGGAFGASNTPAFGASGTPAFGASGTPAFGASSTPAFGASSTPAFGASSTPAFGGSSTPSFGASNTSSFSFGSSPAFGQSTSAFGSSAFGSTPSPFGGAQASTPTFGGSGFGQSTFGGQQGGSRAVPYAPTVEADTGTGTQPAGKLESISAMPAYKEKNYEELRWEDYQRGDKGGPLPAGQSPGNAGFGISPSQPNPFSPSPAFGQTSANPTNPFSSSTSTNPFAPQTPTIASSSFGTATSNFGSSPFGVTSSSNLFGSGSSTTTSVFGSSSAFGTTTPSPLFGSSSTPGFGSSSSIFGSAPGQGATPAFGNSQPSTLFNSTPSTGQTGSAFGQTGSAFGQFGQSSAPAFGQNSIFNKPSTGFGNMFSSSSTLTTSSSSPFGQTMPAGVTPFQSAQPGQASNGFGFNNFGQNQAANTTGNAGGLGIFGQGNFGQSPAPLNSVVLQPVAVTNPFGTLPAMPQISINQGGNSPSIQYGISSMPVVDKPAPVRISSLLTSRHLLHRRVRLPARKYRPGENGPKVPFFTDDEESSSTPKADALFIPRENPRALVIRPVQQWSSRDKSILPKEQRPTAPLHDNGKSPDMATDAANHDRNGNGELGATGERIHTSVNANQKPNGTTRSDQASEKERPYKTLSGHRAGEAAIVYEHGADIEALMPKLRQSDYFTEPRIQELAAKERADPGYCRRVRDFVVGRHGYGSIKFMGETDVRRLDLESLVQFNTREVIVYMDESKKPAVGQGLNKPAEVTLLNIKCIDKKTGKQFTEGERVEKYKMMLKKKAEAQGAEFVSFDPVKGEWKFRVEHFSSYKLGDEDEEDGV</sequence>
<proteinExistence type="evidence at protein level"/>
<comment type="subunit">
    <text evidence="5">Part of the nuclear pore complex (NPC). The NPC has an eight-fold symmetrical structure comprising a central transport channel and two rings, the cytoplasmic and nuclear rings, to which eight filaments are attached. The cytoplasmic filaments have loose ends, while the nuclear filaments are joined in a distal ring, forming a nuclear basket. NPCs are highly dynamic in configuration and composition, and can be devided in 3 subcomplexes, the NUP62 subcomplex, the NUP107-160 subcomplex and the NUP93 subcomplex, containing approximately 30 different nucleoporin proteins.</text>
</comment>
<comment type="subcellular location">
    <subcellularLocation>
        <location evidence="5">Nucleus</location>
        <location evidence="5">Nuclear pore complex</location>
    </subcellularLocation>
</comment>
<comment type="domain">
    <text evidence="4">Contains FG repeats mediating the translocation through the NPC by interacting with transport factors.</text>
</comment>
<comment type="miscellaneous">
    <text evidence="4">Unlike in mammals and yeast, NUP96 and NUP98 are not translated as a polyprotein.</text>
</comment>
<comment type="similarity">
    <text evidence="4">Belongs to the nucleoporin GLFG family.</text>
</comment>
<comment type="sequence caution" evidence="4">
    <conflict type="erroneous gene model prediction">
        <sequence resource="EMBL-CDS" id="AAD32891"/>
    </conflict>
</comment>
<reference key="1">
    <citation type="journal article" date="2000" name="Nature">
        <title>Sequence and analysis of chromosome 1 of the plant Arabidopsis thaliana.</title>
        <authorList>
            <person name="Theologis A."/>
            <person name="Ecker J.R."/>
            <person name="Palm C.J."/>
            <person name="Federspiel N.A."/>
            <person name="Kaul S."/>
            <person name="White O."/>
            <person name="Alonso J."/>
            <person name="Altafi H."/>
            <person name="Araujo R."/>
            <person name="Bowman C.L."/>
            <person name="Brooks S.Y."/>
            <person name="Buehler E."/>
            <person name="Chan A."/>
            <person name="Chao Q."/>
            <person name="Chen H."/>
            <person name="Cheuk R.F."/>
            <person name="Chin C.W."/>
            <person name="Chung M.K."/>
            <person name="Conn L."/>
            <person name="Conway A.B."/>
            <person name="Conway A.R."/>
            <person name="Creasy T.H."/>
            <person name="Dewar K."/>
            <person name="Dunn P."/>
            <person name="Etgu P."/>
            <person name="Feldblyum T.V."/>
            <person name="Feng J.-D."/>
            <person name="Fong B."/>
            <person name="Fujii C.Y."/>
            <person name="Gill J.E."/>
            <person name="Goldsmith A.D."/>
            <person name="Haas B."/>
            <person name="Hansen N.F."/>
            <person name="Hughes B."/>
            <person name="Huizar L."/>
            <person name="Hunter J.L."/>
            <person name="Jenkins J."/>
            <person name="Johnson-Hopson C."/>
            <person name="Khan S."/>
            <person name="Khaykin E."/>
            <person name="Kim C.J."/>
            <person name="Koo H.L."/>
            <person name="Kremenetskaia I."/>
            <person name="Kurtz D.B."/>
            <person name="Kwan A."/>
            <person name="Lam B."/>
            <person name="Langin-Hooper S."/>
            <person name="Lee A."/>
            <person name="Lee J.M."/>
            <person name="Lenz C.A."/>
            <person name="Li J.H."/>
            <person name="Li Y.-P."/>
            <person name="Lin X."/>
            <person name="Liu S.X."/>
            <person name="Liu Z.A."/>
            <person name="Luros J.S."/>
            <person name="Maiti R."/>
            <person name="Marziali A."/>
            <person name="Militscher J."/>
            <person name="Miranda M."/>
            <person name="Nguyen M."/>
            <person name="Nierman W.C."/>
            <person name="Osborne B.I."/>
            <person name="Pai G."/>
            <person name="Peterson J."/>
            <person name="Pham P.K."/>
            <person name="Rizzo M."/>
            <person name="Rooney T."/>
            <person name="Rowley D."/>
            <person name="Sakano H."/>
            <person name="Salzberg S.L."/>
            <person name="Schwartz J.R."/>
            <person name="Shinn P."/>
            <person name="Southwick A.M."/>
            <person name="Sun H."/>
            <person name="Tallon L.J."/>
            <person name="Tambunga G."/>
            <person name="Toriumi M.J."/>
            <person name="Town C.D."/>
            <person name="Utterback T."/>
            <person name="Van Aken S."/>
            <person name="Vaysberg M."/>
            <person name="Vysotskaia V.S."/>
            <person name="Walker M."/>
            <person name="Wu D."/>
            <person name="Yu G."/>
            <person name="Fraser C.M."/>
            <person name="Venter J.C."/>
            <person name="Davis R.W."/>
        </authorList>
    </citation>
    <scope>NUCLEOTIDE SEQUENCE [LARGE SCALE GENOMIC DNA]</scope>
    <source>
        <strain>cv. Columbia</strain>
    </source>
</reference>
<reference key="2">
    <citation type="journal article" date="2017" name="Plant J.">
        <title>Araport11: a complete reannotation of the Arabidopsis thaliana reference genome.</title>
        <authorList>
            <person name="Cheng C.Y."/>
            <person name="Krishnakumar V."/>
            <person name="Chan A.P."/>
            <person name="Thibaud-Nissen F."/>
            <person name="Schobel S."/>
            <person name="Town C.D."/>
        </authorList>
    </citation>
    <scope>GENOME REANNOTATION</scope>
    <source>
        <strain>cv. Columbia</strain>
    </source>
</reference>
<reference key="3">
    <citation type="journal article" date="2003" name="Science">
        <title>Empirical analysis of transcriptional activity in the Arabidopsis genome.</title>
        <authorList>
            <person name="Yamada K."/>
            <person name="Lim J."/>
            <person name="Dale J.M."/>
            <person name="Chen H."/>
            <person name="Shinn P."/>
            <person name="Palm C.J."/>
            <person name="Southwick A.M."/>
            <person name="Wu H.C."/>
            <person name="Kim C.J."/>
            <person name="Nguyen M."/>
            <person name="Pham P.K."/>
            <person name="Cheuk R.F."/>
            <person name="Karlin-Newmann G."/>
            <person name="Liu S.X."/>
            <person name="Lam B."/>
            <person name="Sakano H."/>
            <person name="Wu T."/>
            <person name="Yu G."/>
            <person name="Miranda M."/>
            <person name="Quach H.L."/>
            <person name="Tripp M."/>
            <person name="Chang C.H."/>
            <person name="Lee J.M."/>
            <person name="Toriumi M.J."/>
            <person name="Chan M.M."/>
            <person name="Tang C.C."/>
            <person name="Onodera C.S."/>
            <person name="Deng J.M."/>
            <person name="Akiyama K."/>
            <person name="Ansari Y."/>
            <person name="Arakawa T."/>
            <person name="Banh J."/>
            <person name="Banno F."/>
            <person name="Bowser L."/>
            <person name="Brooks S.Y."/>
            <person name="Carninci P."/>
            <person name="Chao Q."/>
            <person name="Choy N."/>
            <person name="Enju A."/>
            <person name="Goldsmith A.D."/>
            <person name="Gurjal M."/>
            <person name="Hansen N.F."/>
            <person name="Hayashizaki Y."/>
            <person name="Johnson-Hopson C."/>
            <person name="Hsuan V.W."/>
            <person name="Iida K."/>
            <person name="Karnes M."/>
            <person name="Khan S."/>
            <person name="Koesema E."/>
            <person name="Ishida J."/>
            <person name="Jiang P.X."/>
            <person name="Jones T."/>
            <person name="Kawai J."/>
            <person name="Kamiya A."/>
            <person name="Meyers C."/>
            <person name="Nakajima M."/>
            <person name="Narusaka M."/>
            <person name="Seki M."/>
            <person name="Sakurai T."/>
            <person name="Satou M."/>
            <person name="Tamse R."/>
            <person name="Vaysberg M."/>
            <person name="Wallender E.K."/>
            <person name="Wong C."/>
            <person name="Yamamura Y."/>
            <person name="Yuan S."/>
            <person name="Shinozaki K."/>
            <person name="Davis R.W."/>
            <person name="Theologis A."/>
            <person name="Ecker J.R."/>
        </authorList>
    </citation>
    <scope>NUCLEOTIDE SEQUENCE [LARGE SCALE MRNA]</scope>
    <source>
        <strain>cv. Columbia</strain>
    </source>
</reference>
<reference key="4">
    <citation type="submission" date="2006-07" db="EMBL/GenBank/DDBJ databases">
        <title>Large-scale analysis of RIKEN Arabidopsis full-length (RAFL) cDNAs.</title>
        <authorList>
            <person name="Totoki Y."/>
            <person name="Seki M."/>
            <person name="Ishida J."/>
            <person name="Nakajima M."/>
            <person name="Enju A."/>
            <person name="Kamiya A."/>
            <person name="Narusaka M."/>
            <person name="Shin-i T."/>
            <person name="Nakagawa M."/>
            <person name="Sakamoto N."/>
            <person name="Oishi K."/>
            <person name="Kohara Y."/>
            <person name="Kobayashi M."/>
            <person name="Toyoda A."/>
            <person name="Sakaki Y."/>
            <person name="Sakurai T."/>
            <person name="Iida K."/>
            <person name="Akiyama K."/>
            <person name="Satou M."/>
            <person name="Toyoda T."/>
            <person name="Konagaya A."/>
            <person name="Carninci P."/>
            <person name="Kawai J."/>
            <person name="Hayashizaki Y."/>
            <person name="Shinozaki K."/>
        </authorList>
    </citation>
    <scope>NUCLEOTIDE SEQUENCE [LARGE SCALE MRNA]</scope>
    <source>
        <strain>cv. Columbia</strain>
    </source>
</reference>
<reference key="5">
    <citation type="journal article" date="2010" name="Plant Cell">
        <title>Identification and characterization of nuclear pore complex components in Arabidopsis thaliana.</title>
        <authorList>
            <person name="Tamura K."/>
            <person name="Fukao Y."/>
            <person name="Iwamoto M."/>
            <person name="Haraguchi T."/>
            <person name="Hara-Nishimura I."/>
        </authorList>
    </citation>
    <scope>IDENTIFICATION IN THE NUCLEAR PORE COMPLEX BY MASS SPECTROMETRY</scope>
    <scope>NOMENCLATURE</scope>
</reference>
<name>NU98A_ARATH</name>
<organism evidence="7">
    <name type="scientific">Arabidopsis thaliana</name>
    <name type="common">Mouse-ear cress</name>
    <dbReference type="NCBI Taxonomy" id="3702"/>
    <lineage>
        <taxon>Eukaryota</taxon>
        <taxon>Viridiplantae</taxon>
        <taxon>Streptophyta</taxon>
        <taxon>Embryophyta</taxon>
        <taxon>Tracheophyta</taxon>
        <taxon>Spermatophyta</taxon>
        <taxon>Magnoliopsida</taxon>
        <taxon>eudicotyledons</taxon>
        <taxon>Gunneridae</taxon>
        <taxon>Pentapetalae</taxon>
        <taxon>rosids</taxon>
        <taxon>malvids</taxon>
        <taxon>Brassicales</taxon>
        <taxon>Brassicaceae</taxon>
        <taxon>Camelineae</taxon>
        <taxon>Arabidopsis</taxon>
    </lineage>
</organism>
<gene>
    <name evidence="3" type="primary">NUP98A</name>
    <name evidence="6" type="ordered locus">At1g10390</name>
    <name evidence="7" type="ORF">F14N23.29</name>
</gene>
<accession>Q8RY25</accession>
<accession>Q9SY83</accession>